<organism>
    <name type="scientific">Staphylococcus aureus (strain bovine RF122 / ET3-1)</name>
    <dbReference type="NCBI Taxonomy" id="273036"/>
    <lineage>
        <taxon>Bacteria</taxon>
        <taxon>Bacillati</taxon>
        <taxon>Bacillota</taxon>
        <taxon>Bacilli</taxon>
        <taxon>Bacillales</taxon>
        <taxon>Staphylococcaceae</taxon>
        <taxon>Staphylococcus</taxon>
    </lineage>
</organism>
<keyword id="KW-0002">3D-structure</keyword>
<keyword id="KW-0687">Ribonucleoprotein</keyword>
<keyword id="KW-0689">Ribosomal protein</keyword>
<keyword id="KW-0694">RNA-binding</keyword>
<keyword id="KW-0699">rRNA-binding</keyword>
<reference key="1">
    <citation type="journal article" date="2007" name="PLoS ONE">
        <title>Molecular correlates of host specialization in Staphylococcus aureus.</title>
        <authorList>
            <person name="Herron-Olson L."/>
            <person name="Fitzgerald J.R."/>
            <person name="Musser J.M."/>
            <person name="Kapur V."/>
        </authorList>
    </citation>
    <scope>NUCLEOTIDE SEQUENCE [LARGE SCALE GENOMIC DNA]</scope>
    <source>
        <strain>bovine RF122 / ET3-1</strain>
    </source>
</reference>
<accession>Q2YT41</accession>
<dbReference type="EMBL" id="AJ938182">
    <property type="protein sequence ID" value="CAI81147.1"/>
    <property type="molecule type" value="Genomic_DNA"/>
</dbReference>
<dbReference type="RefSeq" id="WP_001274017.1">
    <property type="nucleotide sequence ID" value="NC_007622.1"/>
</dbReference>
<dbReference type="PDB" id="6FXC">
    <property type="method" value="EM"/>
    <property type="resolution" value="6.76 A"/>
    <property type="chains" value="At/Bt=2-82"/>
</dbReference>
<dbReference type="PDBsum" id="6FXC"/>
<dbReference type="EMDB" id="EMD-3637"/>
<dbReference type="SMR" id="Q2YT41"/>
<dbReference type="GeneID" id="66839775"/>
<dbReference type="KEGG" id="sab:SAB1458"/>
<dbReference type="HOGENOM" id="CLU_160655_1_1_9"/>
<dbReference type="GO" id="GO:0005829">
    <property type="term" value="C:cytosol"/>
    <property type="evidence" value="ECO:0007669"/>
    <property type="project" value="TreeGrafter"/>
</dbReference>
<dbReference type="GO" id="GO:0015935">
    <property type="term" value="C:small ribosomal subunit"/>
    <property type="evidence" value="ECO:0007669"/>
    <property type="project" value="TreeGrafter"/>
</dbReference>
<dbReference type="GO" id="GO:0070181">
    <property type="term" value="F:small ribosomal subunit rRNA binding"/>
    <property type="evidence" value="ECO:0007669"/>
    <property type="project" value="TreeGrafter"/>
</dbReference>
<dbReference type="GO" id="GO:0003735">
    <property type="term" value="F:structural constituent of ribosome"/>
    <property type="evidence" value="ECO:0007669"/>
    <property type="project" value="InterPro"/>
</dbReference>
<dbReference type="GO" id="GO:0006412">
    <property type="term" value="P:translation"/>
    <property type="evidence" value="ECO:0007669"/>
    <property type="project" value="UniProtKB-UniRule"/>
</dbReference>
<dbReference type="Gene3D" id="1.20.58.110">
    <property type="entry name" value="Ribosomal protein S20"/>
    <property type="match status" value="1"/>
</dbReference>
<dbReference type="HAMAP" id="MF_00500">
    <property type="entry name" value="Ribosomal_bS20"/>
    <property type="match status" value="1"/>
</dbReference>
<dbReference type="InterPro" id="IPR002583">
    <property type="entry name" value="Ribosomal_bS20"/>
</dbReference>
<dbReference type="InterPro" id="IPR036510">
    <property type="entry name" value="Ribosomal_bS20_sf"/>
</dbReference>
<dbReference type="NCBIfam" id="TIGR00029">
    <property type="entry name" value="S20"/>
    <property type="match status" value="1"/>
</dbReference>
<dbReference type="PANTHER" id="PTHR33398">
    <property type="entry name" value="30S RIBOSOMAL PROTEIN S20"/>
    <property type="match status" value="1"/>
</dbReference>
<dbReference type="PANTHER" id="PTHR33398:SF1">
    <property type="entry name" value="SMALL RIBOSOMAL SUBUNIT PROTEIN BS20C"/>
    <property type="match status" value="1"/>
</dbReference>
<dbReference type="Pfam" id="PF01649">
    <property type="entry name" value="Ribosomal_S20p"/>
    <property type="match status" value="1"/>
</dbReference>
<dbReference type="SUPFAM" id="SSF46992">
    <property type="entry name" value="Ribosomal protein S20"/>
    <property type="match status" value="1"/>
</dbReference>
<evidence type="ECO:0000255" key="1">
    <source>
        <dbReference type="HAMAP-Rule" id="MF_00500"/>
    </source>
</evidence>
<evidence type="ECO:0000305" key="2"/>
<protein>
    <recommendedName>
        <fullName evidence="1">Small ribosomal subunit protein bS20</fullName>
    </recommendedName>
    <alternativeName>
        <fullName evidence="2">30S ribosomal protein S20</fullName>
    </alternativeName>
</protein>
<comment type="function">
    <text evidence="1">Binds directly to 16S ribosomal RNA.</text>
</comment>
<comment type="similarity">
    <text evidence="1">Belongs to the bacterial ribosomal protein bS20 family.</text>
</comment>
<gene>
    <name evidence="1" type="primary">rpsT</name>
    <name type="ordered locus">SAB1458</name>
</gene>
<sequence>MANIKSAIKRVKTTEKAEARNISQKSAMRTAVKNAKTAVSNNADNKNELVSLAVKLVDKAAQSNLIHSNKADRIKSQLMTANK</sequence>
<feature type="chain" id="PRO_0000236452" description="Small ribosomal subunit protein bS20">
    <location>
        <begin position="1"/>
        <end position="83"/>
    </location>
</feature>
<name>RS20_STAAB</name>
<proteinExistence type="evidence at protein level"/>